<gene>
    <name evidence="1" type="primary">rpsK</name>
    <name type="ordered locus">MPN_190</name>
    <name type="ORF">MP641</name>
</gene>
<evidence type="ECO:0000255" key="1">
    <source>
        <dbReference type="HAMAP-Rule" id="MF_01310"/>
    </source>
</evidence>
<evidence type="ECO:0000305" key="2"/>
<evidence type="ECO:0007829" key="3">
    <source>
        <dbReference type="PDB" id="8P6P"/>
    </source>
</evidence>
<name>RS11_MYCPN</name>
<organism>
    <name type="scientific">Mycoplasma pneumoniae (strain ATCC 29342 / M129 / Subtype 1)</name>
    <name type="common">Mycoplasmoides pneumoniae</name>
    <dbReference type="NCBI Taxonomy" id="272634"/>
    <lineage>
        <taxon>Bacteria</taxon>
        <taxon>Bacillati</taxon>
        <taxon>Mycoplasmatota</taxon>
        <taxon>Mycoplasmoidales</taxon>
        <taxon>Mycoplasmoidaceae</taxon>
        <taxon>Mycoplasmoides</taxon>
    </lineage>
</organism>
<keyword id="KW-0002">3D-structure</keyword>
<keyword id="KW-1185">Reference proteome</keyword>
<keyword id="KW-0687">Ribonucleoprotein</keyword>
<keyword id="KW-0689">Ribosomal protein</keyword>
<keyword id="KW-0694">RNA-binding</keyword>
<keyword id="KW-0699">rRNA-binding</keyword>
<reference key="1">
    <citation type="journal article" date="1996" name="Nucleic Acids Res.">
        <title>Sequence analysis of 56 kb from the genome of the bacterium Mycoplasma pneumoniae comprising the dnaA region, the atp operon and a cluster of ribosomal protein genes.</title>
        <authorList>
            <person name="Hilbert H."/>
            <person name="Himmelreich R."/>
            <person name="Plagens H."/>
            <person name="Herrmann R."/>
        </authorList>
    </citation>
    <scope>NUCLEOTIDE SEQUENCE [GENOMIC DNA]</scope>
    <source>
        <strain>ATCC 29342 / M129 / Subtype 1</strain>
    </source>
</reference>
<reference key="2">
    <citation type="journal article" date="1996" name="Nucleic Acids Res.">
        <title>Complete sequence analysis of the genome of the bacterium Mycoplasma pneumoniae.</title>
        <authorList>
            <person name="Himmelreich R."/>
            <person name="Hilbert H."/>
            <person name="Plagens H."/>
            <person name="Pirkl E."/>
            <person name="Li B.-C."/>
            <person name="Herrmann R."/>
        </authorList>
    </citation>
    <scope>NUCLEOTIDE SEQUENCE [LARGE SCALE GENOMIC DNA]</scope>
    <source>
        <strain>ATCC 29342 / M129 / Subtype 1</strain>
    </source>
</reference>
<accession>Q50296</accession>
<feature type="chain" id="PRO_0000123182" description="Small ribosomal subunit protein uS11">
    <location>
        <begin position="1"/>
        <end position="121"/>
    </location>
</feature>
<feature type="strand" evidence="3">
    <location>
        <begin position="10"/>
        <end position="18"/>
    </location>
</feature>
<feature type="strand" evidence="3">
    <location>
        <begin position="23"/>
        <end position="28"/>
    </location>
</feature>
<feature type="strand" evidence="3">
    <location>
        <begin position="30"/>
        <end position="32"/>
    </location>
</feature>
<feature type="strand" evidence="3">
    <location>
        <begin position="34"/>
        <end position="39"/>
    </location>
</feature>
<feature type="helix" evidence="3">
    <location>
        <begin position="40"/>
        <end position="43"/>
    </location>
</feature>
<feature type="helix" evidence="3">
    <location>
        <begin position="47"/>
        <end position="51"/>
    </location>
</feature>
<feature type="helix" evidence="3">
    <location>
        <begin position="53"/>
        <end position="70"/>
    </location>
</feature>
<feature type="strand" evidence="3">
    <location>
        <begin position="74"/>
        <end position="81"/>
    </location>
</feature>
<feature type="helix" evidence="3">
    <location>
        <begin position="88"/>
        <end position="96"/>
    </location>
</feature>
<feature type="strand" evidence="3">
    <location>
        <begin position="99"/>
        <end position="102"/>
    </location>
</feature>
<proteinExistence type="evidence at protein level"/>
<protein>
    <recommendedName>
        <fullName evidence="1">Small ribosomal subunit protein uS11</fullName>
    </recommendedName>
    <alternativeName>
        <fullName evidence="2">30S ribosomal protein S11</fullName>
    </alternativeName>
</protein>
<dbReference type="EMBL" id="U34795">
    <property type="protein sequence ID" value="AAC43691.1"/>
    <property type="molecule type" value="Genomic_DNA"/>
</dbReference>
<dbReference type="EMBL" id="U00089">
    <property type="protein sequence ID" value="AAB96289.1"/>
    <property type="molecule type" value="Genomic_DNA"/>
</dbReference>
<dbReference type="PIR" id="S62818">
    <property type="entry name" value="S62818"/>
</dbReference>
<dbReference type="RefSeq" id="NP_109878.1">
    <property type="nucleotide sequence ID" value="NC_000912.1"/>
</dbReference>
<dbReference type="RefSeq" id="WP_010874547.1">
    <property type="nucleotide sequence ID" value="NZ_OU342337.1"/>
</dbReference>
<dbReference type="PDB" id="7OOC">
    <property type="method" value="EM"/>
    <property type="resolution" value="3.70 A"/>
    <property type="chains" value="J=1-121"/>
</dbReference>
<dbReference type="PDB" id="7P6Z">
    <property type="method" value="EM"/>
    <property type="resolution" value="3.50 A"/>
    <property type="chains" value="J=1-121"/>
</dbReference>
<dbReference type="PDB" id="7PAH">
    <property type="method" value="EM"/>
    <property type="resolution" value="9.50 A"/>
    <property type="chains" value="J=1-121"/>
</dbReference>
<dbReference type="PDB" id="7PAI">
    <property type="method" value="EM"/>
    <property type="resolution" value="6.70 A"/>
    <property type="chains" value="J=1-121"/>
</dbReference>
<dbReference type="PDB" id="7PAJ">
    <property type="method" value="EM"/>
    <property type="resolution" value="7.30 A"/>
    <property type="chains" value="J=1-121"/>
</dbReference>
<dbReference type="PDB" id="7PAK">
    <property type="method" value="EM"/>
    <property type="resolution" value="5.30 A"/>
    <property type="chains" value="J=1-121"/>
</dbReference>
<dbReference type="PDB" id="7PAL">
    <property type="method" value="EM"/>
    <property type="resolution" value="4.70 A"/>
    <property type="chains" value="J=1-121"/>
</dbReference>
<dbReference type="PDB" id="7PAM">
    <property type="method" value="EM"/>
    <property type="resolution" value="6.80 A"/>
    <property type="chains" value="J=1-121"/>
</dbReference>
<dbReference type="PDB" id="7PAN">
    <property type="method" value="EM"/>
    <property type="resolution" value="9.70 A"/>
    <property type="chains" value="J=1-121"/>
</dbReference>
<dbReference type="PDB" id="7PAO">
    <property type="method" value="EM"/>
    <property type="resolution" value="7.00 A"/>
    <property type="chains" value="J=1-121"/>
</dbReference>
<dbReference type="PDB" id="7PAQ">
    <property type="method" value="EM"/>
    <property type="resolution" value="8.90 A"/>
    <property type="chains" value="J=1-121"/>
</dbReference>
<dbReference type="PDB" id="7PAR">
    <property type="method" value="EM"/>
    <property type="resolution" value="8.20 A"/>
    <property type="chains" value="J=1-121"/>
</dbReference>
<dbReference type="PDB" id="7PAS">
    <property type="method" value="EM"/>
    <property type="resolution" value="16.00 A"/>
    <property type="chains" value="J=1-121"/>
</dbReference>
<dbReference type="PDB" id="7PH9">
    <property type="method" value="EM"/>
    <property type="resolution" value="8.70 A"/>
    <property type="chains" value="J=1-121"/>
</dbReference>
<dbReference type="PDB" id="7PHA">
    <property type="method" value="EM"/>
    <property type="resolution" value="8.50 A"/>
    <property type="chains" value="J=1-121"/>
</dbReference>
<dbReference type="PDB" id="7PHB">
    <property type="method" value="EM"/>
    <property type="resolution" value="4.90 A"/>
    <property type="chains" value="J=1-121"/>
</dbReference>
<dbReference type="PDB" id="7PHC">
    <property type="method" value="EM"/>
    <property type="resolution" value="9.90 A"/>
    <property type="chains" value="J=1-121"/>
</dbReference>
<dbReference type="PDB" id="7PI8">
    <property type="method" value="EM"/>
    <property type="resolution" value="8.90 A"/>
    <property type="chains" value="J=1-121"/>
</dbReference>
<dbReference type="PDB" id="7PI9">
    <property type="method" value="EM"/>
    <property type="resolution" value="6.30 A"/>
    <property type="chains" value="J=1-121"/>
</dbReference>
<dbReference type="PDB" id="7PIA">
    <property type="method" value="EM"/>
    <property type="resolution" value="13.60 A"/>
    <property type="chains" value="J=1-121"/>
</dbReference>
<dbReference type="PDB" id="7PIB">
    <property type="method" value="EM"/>
    <property type="resolution" value="4.70 A"/>
    <property type="chains" value="J=1-121"/>
</dbReference>
<dbReference type="PDB" id="7PIC">
    <property type="method" value="EM"/>
    <property type="resolution" value="9.10 A"/>
    <property type="chains" value="J=1-121"/>
</dbReference>
<dbReference type="PDB" id="7PIO">
    <property type="method" value="EM"/>
    <property type="resolution" value="9.50 A"/>
    <property type="chains" value="J=1-121"/>
</dbReference>
<dbReference type="PDB" id="7PIP">
    <property type="method" value="EM"/>
    <property type="resolution" value="9.30 A"/>
    <property type="chains" value="J=1-121"/>
</dbReference>
<dbReference type="PDB" id="7PIQ">
    <property type="method" value="EM"/>
    <property type="resolution" value="9.70 A"/>
    <property type="chains" value="J=1-121"/>
</dbReference>
<dbReference type="PDB" id="7PIR">
    <property type="method" value="EM"/>
    <property type="resolution" value="12.10 A"/>
    <property type="chains" value="J=1-121"/>
</dbReference>
<dbReference type="PDB" id="7PIS">
    <property type="method" value="EM"/>
    <property type="resolution" value="15.00 A"/>
    <property type="chains" value="J=1-121"/>
</dbReference>
<dbReference type="PDB" id="7PIT">
    <property type="method" value="EM"/>
    <property type="resolution" value="5.70 A"/>
    <property type="chains" value="J=1-121"/>
</dbReference>
<dbReference type="PDB" id="8P6P">
    <property type="method" value="EM"/>
    <property type="resolution" value="3.20 A"/>
    <property type="chains" value="J=1-121"/>
</dbReference>
<dbReference type="PDB" id="8P7X">
    <property type="method" value="EM"/>
    <property type="resolution" value="3.03 A"/>
    <property type="chains" value="J=1-121"/>
</dbReference>
<dbReference type="PDB" id="8P7Y">
    <property type="method" value="EM"/>
    <property type="resolution" value="3.70 A"/>
    <property type="chains" value="J=1-121"/>
</dbReference>
<dbReference type="PDB" id="8P8V">
    <property type="method" value="EM"/>
    <property type="resolution" value="8.70 A"/>
    <property type="chains" value="J=1-121"/>
</dbReference>
<dbReference type="PDB" id="8P8W">
    <property type="method" value="EM"/>
    <property type="resolution" value="8.70 A"/>
    <property type="chains" value="J=1-121"/>
</dbReference>
<dbReference type="PDBsum" id="7OOC"/>
<dbReference type="PDBsum" id="7P6Z"/>
<dbReference type="PDBsum" id="7PAH"/>
<dbReference type="PDBsum" id="7PAI"/>
<dbReference type="PDBsum" id="7PAJ"/>
<dbReference type="PDBsum" id="7PAK"/>
<dbReference type="PDBsum" id="7PAL"/>
<dbReference type="PDBsum" id="7PAM"/>
<dbReference type="PDBsum" id="7PAN"/>
<dbReference type="PDBsum" id="7PAO"/>
<dbReference type="PDBsum" id="7PAQ"/>
<dbReference type="PDBsum" id="7PAR"/>
<dbReference type="PDBsum" id="7PAS"/>
<dbReference type="PDBsum" id="7PH9"/>
<dbReference type="PDBsum" id="7PHA"/>
<dbReference type="PDBsum" id="7PHB"/>
<dbReference type="PDBsum" id="7PHC"/>
<dbReference type="PDBsum" id="7PI8"/>
<dbReference type="PDBsum" id="7PI9"/>
<dbReference type="PDBsum" id="7PIA"/>
<dbReference type="PDBsum" id="7PIB"/>
<dbReference type="PDBsum" id="7PIC"/>
<dbReference type="PDBsum" id="7PIO"/>
<dbReference type="PDBsum" id="7PIP"/>
<dbReference type="PDBsum" id="7PIQ"/>
<dbReference type="PDBsum" id="7PIR"/>
<dbReference type="PDBsum" id="7PIS"/>
<dbReference type="PDBsum" id="7PIT"/>
<dbReference type="PDBsum" id="8P6P"/>
<dbReference type="PDBsum" id="8P7X"/>
<dbReference type="PDBsum" id="8P7Y"/>
<dbReference type="PDBsum" id="8P8V"/>
<dbReference type="PDBsum" id="8P8W"/>
<dbReference type="EMDB" id="EMD-13234"/>
<dbReference type="EMDB" id="EMD-13272"/>
<dbReference type="EMDB" id="EMD-13273"/>
<dbReference type="EMDB" id="EMD-13274"/>
<dbReference type="EMDB" id="EMD-13275"/>
<dbReference type="EMDB" id="EMD-13276"/>
<dbReference type="EMDB" id="EMD-13277"/>
<dbReference type="EMDB" id="EMD-13278"/>
<dbReference type="EMDB" id="EMD-13279"/>
<dbReference type="EMDB" id="EMD-13280"/>
<dbReference type="EMDB" id="EMD-13281"/>
<dbReference type="EMDB" id="EMD-13282"/>
<dbReference type="EMDB" id="EMD-13410"/>
<dbReference type="EMDB" id="EMD-13411"/>
<dbReference type="EMDB" id="EMD-13412"/>
<dbReference type="EMDB" id="EMD-13413"/>
<dbReference type="EMDB" id="EMD-13432"/>
<dbReference type="EMDB" id="EMD-13433"/>
<dbReference type="EMDB" id="EMD-13434"/>
<dbReference type="EMDB" id="EMD-13435"/>
<dbReference type="EMDB" id="EMD-13436"/>
<dbReference type="EMDB" id="EMD-13445"/>
<dbReference type="EMDB" id="EMD-13446"/>
<dbReference type="EMDB" id="EMD-13447"/>
<dbReference type="EMDB" id="EMD-13448"/>
<dbReference type="EMDB" id="EMD-13449"/>
<dbReference type="EMDB" id="EMD-13450"/>
<dbReference type="SMR" id="Q50296"/>
<dbReference type="STRING" id="272634.MPN_190"/>
<dbReference type="EnsemblBacteria" id="AAB96289">
    <property type="protein sequence ID" value="AAB96289"/>
    <property type="gene ID" value="MPN_190"/>
</dbReference>
<dbReference type="GeneID" id="66609162"/>
<dbReference type="KEGG" id="mpn:MPN_190"/>
<dbReference type="PATRIC" id="fig|272634.6.peg.208"/>
<dbReference type="HOGENOM" id="CLU_072439_5_3_14"/>
<dbReference type="OrthoDB" id="9806415at2"/>
<dbReference type="BioCyc" id="MPNE272634:G1GJ3-305-MONOMER"/>
<dbReference type="Proteomes" id="UP000000808">
    <property type="component" value="Chromosome"/>
</dbReference>
<dbReference type="GO" id="GO:1990904">
    <property type="term" value="C:ribonucleoprotein complex"/>
    <property type="evidence" value="ECO:0007669"/>
    <property type="project" value="UniProtKB-KW"/>
</dbReference>
<dbReference type="GO" id="GO:0005840">
    <property type="term" value="C:ribosome"/>
    <property type="evidence" value="ECO:0007669"/>
    <property type="project" value="UniProtKB-KW"/>
</dbReference>
<dbReference type="GO" id="GO:0019843">
    <property type="term" value="F:rRNA binding"/>
    <property type="evidence" value="ECO:0007669"/>
    <property type="project" value="UniProtKB-UniRule"/>
</dbReference>
<dbReference type="GO" id="GO:0003735">
    <property type="term" value="F:structural constituent of ribosome"/>
    <property type="evidence" value="ECO:0007669"/>
    <property type="project" value="InterPro"/>
</dbReference>
<dbReference type="GO" id="GO:0006412">
    <property type="term" value="P:translation"/>
    <property type="evidence" value="ECO:0007669"/>
    <property type="project" value="UniProtKB-UniRule"/>
</dbReference>
<dbReference type="FunFam" id="3.30.420.80:FF:000010">
    <property type="entry name" value="30S ribosomal protein S11"/>
    <property type="match status" value="1"/>
</dbReference>
<dbReference type="Gene3D" id="3.30.420.80">
    <property type="entry name" value="Ribosomal protein S11"/>
    <property type="match status" value="1"/>
</dbReference>
<dbReference type="HAMAP" id="MF_01310">
    <property type="entry name" value="Ribosomal_uS11"/>
    <property type="match status" value="1"/>
</dbReference>
<dbReference type="InterPro" id="IPR001971">
    <property type="entry name" value="Ribosomal_uS11"/>
</dbReference>
<dbReference type="InterPro" id="IPR019981">
    <property type="entry name" value="Ribosomal_uS11_bac-type"/>
</dbReference>
<dbReference type="InterPro" id="IPR018102">
    <property type="entry name" value="Ribosomal_uS11_CS"/>
</dbReference>
<dbReference type="InterPro" id="IPR036967">
    <property type="entry name" value="Ribosomal_uS11_sf"/>
</dbReference>
<dbReference type="NCBIfam" id="NF003698">
    <property type="entry name" value="PRK05309.1"/>
    <property type="match status" value="1"/>
</dbReference>
<dbReference type="NCBIfam" id="TIGR03632">
    <property type="entry name" value="uS11_bact"/>
    <property type="match status" value="1"/>
</dbReference>
<dbReference type="PANTHER" id="PTHR11759">
    <property type="entry name" value="40S RIBOSOMAL PROTEIN S14/30S RIBOSOMAL PROTEIN S11"/>
    <property type="match status" value="1"/>
</dbReference>
<dbReference type="Pfam" id="PF00411">
    <property type="entry name" value="Ribosomal_S11"/>
    <property type="match status" value="1"/>
</dbReference>
<dbReference type="PIRSF" id="PIRSF002131">
    <property type="entry name" value="Ribosomal_S11"/>
    <property type="match status" value="1"/>
</dbReference>
<dbReference type="SUPFAM" id="SSF53137">
    <property type="entry name" value="Translational machinery components"/>
    <property type="match status" value="1"/>
</dbReference>
<dbReference type="PROSITE" id="PS00054">
    <property type="entry name" value="RIBOSOMAL_S11"/>
    <property type="match status" value="1"/>
</dbReference>
<sequence>MAKKKKINVSSGIIHVSCSPNNTIVSASDPGGNVLCWASSGTMGFKGSRKKTPYSAGIAADKVAKTVKEMGMATVKLFVKGTGRGKDTAIRSFANAGLSITEINEKTPIPHNGCKPPKRPR</sequence>
<comment type="function">
    <text evidence="1">Located on the platform of the 30S subunit, it bridges several disparate RNA helices of the 16S rRNA. Forms part of the Shine-Dalgarno cleft in the 70S ribosome.</text>
</comment>
<comment type="subunit">
    <text evidence="1">Part of the 30S ribosomal subunit. Interacts with proteins S7 and S18. Binds to IF-3.</text>
</comment>
<comment type="similarity">
    <text evidence="1">Belongs to the universal ribosomal protein uS11 family.</text>
</comment>